<name>MENG_ROSS1</name>
<protein>
    <recommendedName>
        <fullName evidence="1">Demethylmenaquinone methyltransferase</fullName>
        <ecNumber evidence="1">2.1.1.163</ecNumber>
    </recommendedName>
</protein>
<gene>
    <name evidence="1" type="primary">menG</name>
    <name type="ordered locus">RoseRS_2185</name>
</gene>
<organism>
    <name type="scientific">Roseiflexus sp. (strain RS-1)</name>
    <dbReference type="NCBI Taxonomy" id="357808"/>
    <lineage>
        <taxon>Bacteria</taxon>
        <taxon>Bacillati</taxon>
        <taxon>Chloroflexota</taxon>
        <taxon>Chloroflexia</taxon>
        <taxon>Chloroflexales</taxon>
        <taxon>Roseiflexineae</taxon>
        <taxon>Roseiflexaceae</taxon>
        <taxon>Roseiflexus</taxon>
    </lineage>
</organism>
<reference key="1">
    <citation type="submission" date="2007-04" db="EMBL/GenBank/DDBJ databases">
        <title>Complete sequence of Roseiflexus sp. RS-1.</title>
        <authorList>
            <consortium name="US DOE Joint Genome Institute"/>
            <person name="Copeland A."/>
            <person name="Lucas S."/>
            <person name="Lapidus A."/>
            <person name="Barry K."/>
            <person name="Detter J.C."/>
            <person name="Glavina del Rio T."/>
            <person name="Hammon N."/>
            <person name="Israni S."/>
            <person name="Dalin E."/>
            <person name="Tice H."/>
            <person name="Pitluck S."/>
            <person name="Chertkov O."/>
            <person name="Brettin T."/>
            <person name="Bruce D."/>
            <person name="Han C."/>
            <person name="Schmutz J."/>
            <person name="Larimer F."/>
            <person name="Land M."/>
            <person name="Hauser L."/>
            <person name="Kyrpides N."/>
            <person name="Mikhailova N."/>
            <person name="Bryant D.A."/>
            <person name="Richardson P."/>
        </authorList>
    </citation>
    <scope>NUCLEOTIDE SEQUENCE [LARGE SCALE GENOMIC DNA]</scope>
    <source>
        <strain>RS-1</strain>
    </source>
</reference>
<accession>A5UVB2</accession>
<evidence type="ECO:0000255" key="1">
    <source>
        <dbReference type="HAMAP-Rule" id="MF_01813"/>
    </source>
</evidence>
<feature type="chain" id="PRO_1000187801" description="Demethylmenaquinone methyltransferase">
    <location>
        <begin position="1"/>
        <end position="238"/>
    </location>
</feature>
<feature type="binding site" evidence="1">
    <location>
        <position position="65"/>
    </location>
    <ligand>
        <name>S-adenosyl-L-methionine</name>
        <dbReference type="ChEBI" id="CHEBI:59789"/>
    </ligand>
</feature>
<feature type="binding site" evidence="1">
    <location>
        <position position="85"/>
    </location>
    <ligand>
        <name>S-adenosyl-L-methionine</name>
        <dbReference type="ChEBI" id="CHEBI:59789"/>
    </ligand>
</feature>
<feature type="binding site" evidence="1">
    <location>
        <begin position="109"/>
        <end position="110"/>
    </location>
    <ligand>
        <name>S-adenosyl-L-methionine</name>
        <dbReference type="ChEBI" id="CHEBI:59789"/>
    </ligand>
</feature>
<comment type="function">
    <text evidence="1">Methyltransferase required for the conversion of demethylmenaquinol (DMKH2) to menaquinol (MKH2).</text>
</comment>
<comment type="catalytic activity">
    <reaction evidence="1">
        <text>a 2-demethylmenaquinol + S-adenosyl-L-methionine = a menaquinol + S-adenosyl-L-homocysteine + H(+)</text>
        <dbReference type="Rhea" id="RHEA:42640"/>
        <dbReference type="Rhea" id="RHEA-COMP:9539"/>
        <dbReference type="Rhea" id="RHEA-COMP:9563"/>
        <dbReference type="ChEBI" id="CHEBI:15378"/>
        <dbReference type="ChEBI" id="CHEBI:18151"/>
        <dbReference type="ChEBI" id="CHEBI:55437"/>
        <dbReference type="ChEBI" id="CHEBI:57856"/>
        <dbReference type="ChEBI" id="CHEBI:59789"/>
        <dbReference type="EC" id="2.1.1.163"/>
    </reaction>
</comment>
<comment type="pathway">
    <text evidence="1">Quinol/quinone metabolism; menaquinone biosynthesis; menaquinol from 1,4-dihydroxy-2-naphthoate: step 2/2.</text>
</comment>
<comment type="similarity">
    <text evidence="1">Belongs to the class I-like SAM-binding methyltransferase superfamily. MenG/UbiE family.</text>
</comment>
<dbReference type="EC" id="2.1.1.163" evidence="1"/>
<dbReference type="EMBL" id="CP000686">
    <property type="protein sequence ID" value="ABQ90565.1"/>
    <property type="molecule type" value="Genomic_DNA"/>
</dbReference>
<dbReference type="RefSeq" id="WP_011956911.1">
    <property type="nucleotide sequence ID" value="NC_009523.1"/>
</dbReference>
<dbReference type="SMR" id="A5UVB2"/>
<dbReference type="STRING" id="357808.RoseRS_2185"/>
<dbReference type="KEGG" id="rrs:RoseRS_2185"/>
<dbReference type="eggNOG" id="COG2226">
    <property type="taxonomic scope" value="Bacteria"/>
</dbReference>
<dbReference type="HOGENOM" id="CLU_037990_0_0_0"/>
<dbReference type="OrthoDB" id="9808140at2"/>
<dbReference type="UniPathway" id="UPA00079">
    <property type="reaction ID" value="UER00169"/>
</dbReference>
<dbReference type="Proteomes" id="UP000006554">
    <property type="component" value="Chromosome"/>
</dbReference>
<dbReference type="GO" id="GO:0043770">
    <property type="term" value="F:demethylmenaquinone methyltransferase activity"/>
    <property type="evidence" value="ECO:0007669"/>
    <property type="project" value="UniProtKB-UniRule"/>
</dbReference>
<dbReference type="GO" id="GO:0009234">
    <property type="term" value="P:menaquinone biosynthetic process"/>
    <property type="evidence" value="ECO:0007669"/>
    <property type="project" value="UniProtKB-UniRule"/>
</dbReference>
<dbReference type="GO" id="GO:0032259">
    <property type="term" value="P:methylation"/>
    <property type="evidence" value="ECO:0007669"/>
    <property type="project" value="UniProtKB-KW"/>
</dbReference>
<dbReference type="CDD" id="cd02440">
    <property type="entry name" value="AdoMet_MTases"/>
    <property type="match status" value="1"/>
</dbReference>
<dbReference type="Gene3D" id="3.40.50.150">
    <property type="entry name" value="Vaccinia Virus protein VP39"/>
    <property type="match status" value="1"/>
</dbReference>
<dbReference type="HAMAP" id="MF_01813">
    <property type="entry name" value="MenG_UbiE_methyltr"/>
    <property type="match status" value="1"/>
</dbReference>
<dbReference type="InterPro" id="IPR029063">
    <property type="entry name" value="SAM-dependent_MTases_sf"/>
</dbReference>
<dbReference type="InterPro" id="IPR004033">
    <property type="entry name" value="UbiE/COQ5_MeTrFase"/>
</dbReference>
<dbReference type="NCBIfam" id="TIGR01934">
    <property type="entry name" value="MenG_MenH_UbiE"/>
    <property type="match status" value="1"/>
</dbReference>
<dbReference type="PANTHER" id="PTHR43591:SF24">
    <property type="entry name" value="2-METHOXY-6-POLYPRENYL-1,4-BENZOQUINOL METHYLASE, MITOCHONDRIAL"/>
    <property type="match status" value="1"/>
</dbReference>
<dbReference type="PANTHER" id="PTHR43591">
    <property type="entry name" value="METHYLTRANSFERASE"/>
    <property type="match status" value="1"/>
</dbReference>
<dbReference type="Pfam" id="PF01209">
    <property type="entry name" value="Ubie_methyltran"/>
    <property type="match status" value="1"/>
</dbReference>
<dbReference type="SUPFAM" id="SSF53335">
    <property type="entry name" value="S-adenosyl-L-methionine-dependent methyltransferases"/>
    <property type="match status" value="1"/>
</dbReference>
<dbReference type="PROSITE" id="PS51608">
    <property type="entry name" value="SAM_MT_UBIE"/>
    <property type="match status" value="1"/>
</dbReference>
<keyword id="KW-0474">Menaquinone biosynthesis</keyword>
<keyword id="KW-0489">Methyltransferase</keyword>
<keyword id="KW-0949">S-adenosyl-L-methionine</keyword>
<keyword id="KW-0808">Transferase</keyword>
<sequence length="238" mass="26005">MSTTVLPPPDKKAEYVERMFSRIAPGYDTMNGIITLGLDREWRATTVALAAPPSCGRALDIGTGTGDFLVELTAWMPDGLAVGVDFTVPMMRAGLPKIRDRRAVFVAGDALKLPFADESFDAITTGFTLRNVTDIAAAFREMWRVARVGATVACLEVARPRHPLLRAGHWFYFQRIVPLMARALGADPEAYTYLPQSARIFPPPEELAQIMRAAGWSDVTYRLVGLGAAAIHTGIKRG</sequence>
<proteinExistence type="inferred from homology"/>